<protein>
    <recommendedName>
        <fullName evidence="1">Formate--tetrahydrofolate ligase</fullName>
        <ecNumber evidence="1">6.3.4.3</ecNumber>
    </recommendedName>
    <alternativeName>
        <fullName evidence="1">Formyltetrahydrofolate synthetase</fullName>
        <shortName evidence="1">FHS</shortName>
        <shortName evidence="1">FTHFS</shortName>
    </alternativeName>
</protein>
<organism>
    <name type="scientific">Rhizobium etli (strain ATCC 51251 / DSM 11541 / JCM 21823 / NBRC 15573 / CFN 42)</name>
    <dbReference type="NCBI Taxonomy" id="347834"/>
    <lineage>
        <taxon>Bacteria</taxon>
        <taxon>Pseudomonadati</taxon>
        <taxon>Pseudomonadota</taxon>
        <taxon>Alphaproteobacteria</taxon>
        <taxon>Hyphomicrobiales</taxon>
        <taxon>Rhizobiaceae</taxon>
        <taxon>Rhizobium/Agrobacterium group</taxon>
        <taxon>Rhizobium</taxon>
    </lineage>
</organism>
<proteinExistence type="inferred from homology"/>
<name>FTHS_RHIEC</name>
<sequence>MPSIKSDIEIARAATKRPIFEIGAKLGIAAEQLVPYGHDKAKVSAEFIAAQAGKKDGKLILVTAINPTPAGEGKTTTTVGLGDGLNRIGKKAIVCIREASLGPCFGVKGGAAGGGYAQVVPMEDINLHFTGDFHAITSAHNLLAAIIDNHIYWGNEENIDIRRITWRRVMDMNDRALRSMISSLGGVANGFPRQGGFDITVASEVMAILCLATDLKDLERRLGDIIIGYRFDKTPVHARDLKADGAMAVLLKDAMQPNLVQTLESNPAFVHGGPFANIAHGCNSVTATKTALKLGEYVVTEAGFGADLGAEKFFDIKCRKAGLRPDAAVIVATVRALKMNGGVKKEDLGTEDVAALKKGCANLGRHVANVRRFGVPVVVAINHFVSDTDAEIAAVKEFVSRLGAEAILCQHWAKGSAGIEELAHKVVELAESGQAKFQPLYGDDISLFEKIEIIASKIYHAGEVTADKAVRDQLQSWEEQGYGKLPVCMAKTQYSFSTDPNLRGAPEGHIVSVREVRLSAGAGFVVAITGEIMTMPGLPKSPSAERIFLNDQGYIEGLF</sequence>
<gene>
    <name evidence="1" type="primary">fhs</name>
    <name type="ordered locus">RHE_CH03078</name>
</gene>
<keyword id="KW-0067">ATP-binding</keyword>
<keyword id="KW-0436">Ligase</keyword>
<keyword id="KW-0547">Nucleotide-binding</keyword>
<keyword id="KW-0554">One-carbon metabolism</keyword>
<keyword id="KW-1185">Reference proteome</keyword>
<evidence type="ECO:0000255" key="1">
    <source>
        <dbReference type="HAMAP-Rule" id="MF_01543"/>
    </source>
</evidence>
<dbReference type="EC" id="6.3.4.3" evidence="1"/>
<dbReference type="EMBL" id="CP000133">
    <property type="protein sequence ID" value="ABC91844.1"/>
    <property type="molecule type" value="Genomic_DNA"/>
</dbReference>
<dbReference type="RefSeq" id="WP_011426314.1">
    <property type="nucleotide sequence ID" value="NC_007761.1"/>
</dbReference>
<dbReference type="SMR" id="Q2K5P2"/>
<dbReference type="KEGG" id="ret:RHE_CH03078"/>
<dbReference type="eggNOG" id="COG2759">
    <property type="taxonomic scope" value="Bacteria"/>
</dbReference>
<dbReference type="HOGENOM" id="CLU_003601_3_3_5"/>
<dbReference type="OrthoDB" id="9761733at2"/>
<dbReference type="UniPathway" id="UPA00193"/>
<dbReference type="Proteomes" id="UP000001936">
    <property type="component" value="Chromosome"/>
</dbReference>
<dbReference type="GO" id="GO:0005524">
    <property type="term" value="F:ATP binding"/>
    <property type="evidence" value="ECO:0007669"/>
    <property type="project" value="UniProtKB-UniRule"/>
</dbReference>
<dbReference type="GO" id="GO:0004329">
    <property type="term" value="F:formate-tetrahydrofolate ligase activity"/>
    <property type="evidence" value="ECO:0007669"/>
    <property type="project" value="UniProtKB-UniRule"/>
</dbReference>
<dbReference type="GO" id="GO:0035999">
    <property type="term" value="P:tetrahydrofolate interconversion"/>
    <property type="evidence" value="ECO:0007669"/>
    <property type="project" value="UniProtKB-UniRule"/>
</dbReference>
<dbReference type="CDD" id="cd00477">
    <property type="entry name" value="FTHFS"/>
    <property type="match status" value="1"/>
</dbReference>
<dbReference type="FunFam" id="3.30.1510.10:FF:000001">
    <property type="entry name" value="Formate--tetrahydrofolate ligase"/>
    <property type="match status" value="1"/>
</dbReference>
<dbReference type="FunFam" id="3.10.410.10:FF:000001">
    <property type="entry name" value="Putative formate--tetrahydrofolate ligase"/>
    <property type="match status" value="1"/>
</dbReference>
<dbReference type="Gene3D" id="3.30.1510.10">
    <property type="entry name" value="Domain 2, N(10)-formyltetrahydrofolate synthetase"/>
    <property type="match status" value="1"/>
</dbReference>
<dbReference type="Gene3D" id="3.10.410.10">
    <property type="entry name" value="Formyltetrahydrofolate synthetase, domain 3"/>
    <property type="match status" value="1"/>
</dbReference>
<dbReference type="Gene3D" id="3.40.50.300">
    <property type="entry name" value="P-loop containing nucleotide triphosphate hydrolases"/>
    <property type="match status" value="1"/>
</dbReference>
<dbReference type="HAMAP" id="MF_01543">
    <property type="entry name" value="FTHFS"/>
    <property type="match status" value="1"/>
</dbReference>
<dbReference type="InterPro" id="IPR000559">
    <property type="entry name" value="Formate_THF_ligase"/>
</dbReference>
<dbReference type="InterPro" id="IPR020628">
    <property type="entry name" value="Formate_THF_ligase_CS"/>
</dbReference>
<dbReference type="InterPro" id="IPR027417">
    <property type="entry name" value="P-loop_NTPase"/>
</dbReference>
<dbReference type="NCBIfam" id="NF010030">
    <property type="entry name" value="PRK13505.1"/>
    <property type="match status" value="1"/>
</dbReference>
<dbReference type="Pfam" id="PF01268">
    <property type="entry name" value="FTHFS"/>
    <property type="match status" value="1"/>
</dbReference>
<dbReference type="SUPFAM" id="SSF52540">
    <property type="entry name" value="P-loop containing nucleoside triphosphate hydrolases"/>
    <property type="match status" value="1"/>
</dbReference>
<dbReference type="PROSITE" id="PS00721">
    <property type="entry name" value="FTHFS_1"/>
    <property type="match status" value="1"/>
</dbReference>
<dbReference type="PROSITE" id="PS00722">
    <property type="entry name" value="FTHFS_2"/>
    <property type="match status" value="1"/>
</dbReference>
<comment type="catalytic activity">
    <reaction evidence="1">
        <text>(6S)-5,6,7,8-tetrahydrofolate + formate + ATP = (6R)-10-formyltetrahydrofolate + ADP + phosphate</text>
        <dbReference type="Rhea" id="RHEA:20221"/>
        <dbReference type="ChEBI" id="CHEBI:15740"/>
        <dbReference type="ChEBI" id="CHEBI:30616"/>
        <dbReference type="ChEBI" id="CHEBI:43474"/>
        <dbReference type="ChEBI" id="CHEBI:57453"/>
        <dbReference type="ChEBI" id="CHEBI:195366"/>
        <dbReference type="ChEBI" id="CHEBI:456216"/>
        <dbReference type="EC" id="6.3.4.3"/>
    </reaction>
</comment>
<comment type="pathway">
    <text evidence="1">One-carbon metabolism; tetrahydrofolate interconversion.</text>
</comment>
<comment type="similarity">
    <text evidence="1">Belongs to the formate--tetrahydrofolate ligase family.</text>
</comment>
<accession>Q2K5P2</accession>
<reference key="1">
    <citation type="journal article" date="2006" name="Proc. Natl. Acad. Sci. U.S.A.">
        <title>The partitioned Rhizobium etli genome: genetic and metabolic redundancy in seven interacting replicons.</title>
        <authorList>
            <person name="Gonzalez V."/>
            <person name="Santamaria R.I."/>
            <person name="Bustos P."/>
            <person name="Hernandez-Gonzalez I."/>
            <person name="Medrano-Soto A."/>
            <person name="Moreno-Hagelsieb G."/>
            <person name="Janga S.C."/>
            <person name="Ramirez M.A."/>
            <person name="Jimenez-Jacinto V."/>
            <person name="Collado-Vides J."/>
            <person name="Davila G."/>
        </authorList>
    </citation>
    <scope>NUCLEOTIDE SEQUENCE [LARGE SCALE GENOMIC DNA]</scope>
    <source>
        <strain>ATCC 51251 / DSM 11541 / JCM 21823 / NBRC 15573 / CFN 42</strain>
    </source>
</reference>
<feature type="chain" id="PRO_0000293052" description="Formate--tetrahydrofolate ligase">
    <location>
        <begin position="1"/>
        <end position="559"/>
    </location>
</feature>
<feature type="binding site" evidence="1">
    <location>
        <begin position="68"/>
        <end position="75"/>
    </location>
    <ligand>
        <name>ATP</name>
        <dbReference type="ChEBI" id="CHEBI:30616"/>
    </ligand>
</feature>